<accession>B1LL58</accession>
<proteinExistence type="inferred from homology"/>
<organism>
    <name type="scientific">Escherichia coli (strain SMS-3-5 / SECEC)</name>
    <dbReference type="NCBI Taxonomy" id="439855"/>
    <lineage>
        <taxon>Bacteria</taxon>
        <taxon>Pseudomonadati</taxon>
        <taxon>Pseudomonadota</taxon>
        <taxon>Gammaproteobacteria</taxon>
        <taxon>Enterobacterales</taxon>
        <taxon>Enterobacteriaceae</taxon>
        <taxon>Escherichia</taxon>
    </lineage>
</organism>
<gene>
    <name evidence="1" type="primary">atpC</name>
    <name type="ordered locus">EcSMS35_4099</name>
</gene>
<name>ATPE_ECOSM</name>
<reference key="1">
    <citation type="journal article" date="2008" name="J. Bacteriol.">
        <title>Insights into the environmental resistance gene pool from the genome sequence of the multidrug-resistant environmental isolate Escherichia coli SMS-3-5.</title>
        <authorList>
            <person name="Fricke W.F."/>
            <person name="Wright M.S."/>
            <person name="Lindell A.H."/>
            <person name="Harkins D.M."/>
            <person name="Baker-Austin C."/>
            <person name="Ravel J."/>
            <person name="Stepanauskas R."/>
        </authorList>
    </citation>
    <scope>NUCLEOTIDE SEQUENCE [LARGE SCALE GENOMIC DNA]</scope>
    <source>
        <strain>SMS-3-5 / SECEC</strain>
    </source>
</reference>
<dbReference type="EMBL" id="CP000970">
    <property type="protein sequence ID" value="ACB18803.1"/>
    <property type="molecule type" value="Genomic_DNA"/>
</dbReference>
<dbReference type="RefSeq" id="WP_001251965.1">
    <property type="nucleotide sequence ID" value="NC_010498.1"/>
</dbReference>
<dbReference type="SMR" id="B1LL58"/>
<dbReference type="KEGG" id="ecm:EcSMS35_4099"/>
<dbReference type="HOGENOM" id="CLU_084338_2_0_6"/>
<dbReference type="Proteomes" id="UP000007011">
    <property type="component" value="Chromosome"/>
</dbReference>
<dbReference type="GO" id="GO:0005886">
    <property type="term" value="C:plasma membrane"/>
    <property type="evidence" value="ECO:0007669"/>
    <property type="project" value="UniProtKB-SubCell"/>
</dbReference>
<dbReference type="GO" id="GO:0045259">
    <property type="term" value="C:proton-transporting ATP synthase complex"/>
    <property type="evidence" value="ECO:0007669"/>
    <property type="project" value="UniProtKB-KW"/>
</dbReference>
<dbReference type="GO" id="GO:0005524">
    <property type="term" value="F:ATP binding"/>
    <property type="evidence" value="ECO:0007669"/>
    <property type="project" value="UniProtKB-UniRule"/>
</dbReference>
<dbReference type="GO" id="GO:0046933">
    <property type="term" value="F:proton-transporting ATP synthase activity, rotational mechanism"/>
    <property type="evidence" value="ECO:0007669"/>
    <property type="project" value="UniProtKB-UniRule"/>
</dbReference>
<dbReference type="CDD" id="cd12152">
    <property type="entry name" value="F1-ATPase_delta"/>
    <property type="match status" value="1"/>
</dbReference>
<dbReference type="FunFam" id="1.20.5.440:FF:000001">
    <property type="entry name" value="ATP synthase epsilon chain"/>
    <property type="match status" value="1"/>
</dbReference>
<dbReference type="FunFam" id="2.60.15.10:FF:000001">
    <property type="entry name" value="ATP synthase epsilon chain"/>
    <property type="match status" value="1"/>
</dbReference>
<dbReference type="Gene3D" id="1.20.5.440">
    <property type="entry name" value="ATP synthase delta/epsilon subunit, C-terminal domain"/>
    <property type="match status" value="1"/>
</dbReference>
<dbReference type="Gene3D" id="2.60.15.10">
    <property type="entry name" value="F0F1 ATP synthase delta/epsilon subunit, N-terminal"/>
    <property type="match status" value="1"/>
</dbReference>
<dbReference type="HAMAP" id="MF_00530">
    <property type="entry name" value="ATP_synth_epsil_bac"/>
    <property type="match status" value="1"/>
</dbReference>
<dbReference type="InterPro" id="IPR036794">
    <property type="entry name" value="ATP_F1_dsu/esu_C_sf"/>
</dbReference>
<dbReference type="InterPro" id="IPR001469">
    <property type="entry name" value="ATP_synth_F1_dsu/esu"/>
</dbReference>
<dbReference type="InterPro" id="IPR020546">
    <property type="entry name" value="ATP_synth_F1_dsu/esu_N"/>
</dbReference>
<dbReference type="InterPro" id="IPR020547">
    <property type="entry name" value="ATP_synth_F1_esu_C"/>
</dbReference>
<dbReference type="InterPro" id="IPR036771">
    <property type="entry name" value="ATPsynth_dsu/esu_N"/>
</dbReference>
<dbReference type="NCBIfam" id="TIGR01216">
    <property type="entry name" value="ATP_synt_epsi"/>
    <property type="match status" value="1"/>
</dbReference>
<dbReference type="NCBIfam" id="NF001847">
    <property type="entry name" value="PRK00571.1-4"/>
    <property type="match status" value="1"/>
</dbReference>
<dbReference type="PANTHER" id="PTHR13822">
    <property type="entry name" value="ATP SYNTHASE DELTA/EPSILON CHAIN"/>
    <property type="match status" value="1"/>
</dbReference>
<dbReference type="PANTHER" id="PTHR13822:SF10">
    <property type="entry name" value="ATP SYNTHASE EPSILON CHAIN, CHLOROPLASTIC"/>
    <property type="match status" value="1"/>
</dbReference>
<dbReference type="Pfam" id="PF00401">
    <property type="entry name" value="ATP-synt_DE"/>
    <property type="match status" value="1"/>
</dbReference>
<dbReference type="Pfam" id="PF02823">
    <property type="entry name" value="ATP-synt_DE_N"/>
    <property type="match status" value="1"/>
</dbReference>
<dbReference type="SUPFAM" id="SSF46604">
    <property type="entry name" value="Epsilon subunit of F1F0-ATP synthase C-terminal domain"/>
    <property type="match status" value="1"/>
</dbReference>
<dbReference type="SUPFAM" id="SSF51344">
    <property type="entry name" value="Epsilon subunit of F1F0-ATP synthase N-terminal domain"/>
    <property type="match status" value="1"/>
</dbReference>
<comment type="function">
    <text evidence="1">Produces ATP from ADP in the presence of a proton gradient across the membrane.</text>
</comment>
<comment type="subunit">
    <text evidence="1">F-type ATPases have 2 components, CF(1) - the catalytic core - and CF(0) - the membrane proton channel. CF(1) has five subunits: alpha(3), beta(3), gamma(1), delta(1), epsilon(1). CF(0) has three main subunits: a, b and c.</text>
</comment>
<comment type="subcellular location">
    <subcellularLocation>
        <location evidence="1">Cell inner membrane</location>
        <topology evidence="1">Peripheral membrane protein</topology>
    </subcellularLocation>
</comment>
<comment type="similarity">
    <text evidence="1">Belongs to the ATPase epsilon chain family.</text>
</comment>
<keyword id="KW-0066">ATP synthesis</keyword>
<keyword id="KW-0997">Cell inner membrane</keyword>
<keyword id="KW-1003">Cell membrane</keyword>
<keyword id="KW-0139">CF(1)</keyword>
<keyword id="KW-0375">Hydrogen ion transport</keyword>
<keyword id="KW-0406">Ion transport</keyword>
<keyword id="KW-0472">Membrane</keyword>
<keyword id="KW-0813">Transport</keyword>
<protein>
    <recommendedName>
        <fullName evidence="1">ATP synthase epsilon chain</fullName>
    </recommendedName>
    <alternativeName>
        <fullName evidence="1">ATP synthase F1 sector epsilon subunit</fullName>
    </alternativeName>
    <alternativeName>
        <fullName evidence="1">F-ATPase epsilon subunit</fullName>
    </alternativeName>
</protein>
<feature type="chain" id="PRO_1000127856" description="ATP synthase epsilon chain">
    <location>
        <begin position="1"/>
        <end position="139"/>
    </location>
</feature>
<sequence length="139" mass="15068">MAMTYHLDVVSAEQQMFSGLVEKIQVTGSEGELGIYPGHAPLLTAIKPGMIRIVKQHGHEEFIYLSGGILEVQPGNVTVLADTAIRGQDLDEARAMEAKRKAEEHISSSHGDVDYAQASAELAKAIAQLRVIELTKKAM</sequence>
<evidence type="ECO:0000255" key="1">
    <source>
        <dbReference type="HAMAP-Rule" id="MF_00530"/>
    </source>
</evidence>